<dbReference type="EC" id="2.1.1.361" evidence="1"/>
<dbReference type="EMBL" id="BC149387">
    <property type="protein sequence ID" value="AAI49388.1"/>
    <property type="molecule type" value="mRNA"/>
</dbReference>
<dbReference type="RefSeq" id="NP_001096725.1">
    <property type="nucleotide sequence ID" value="NM_001103255.2"/>
</dbReference>
<dbReference type="SMR" id="A6QPM3"/>
<dbReference type="FunCoup" id="A6QPM3">
    <property type="interactions" value="90"/>
</dbReference>
<dbReference type="STRING" id="9913.ENSBTAP00000073239"/>
<dbReference type="PaxDb" id="9913-ENSBTAP00000027421"/>
<dbReference type="Ensembl" id="ENSBTAT00000027421.6">
    <property type="protein sequence ID" value="ENSBTAP00000027421.5"/>
    <property type="gene ID" value="ENSBTAG00000020578.7"/>
</dbReference>
<dbReference type="GeneID" id="519857"/>
<dbReference type="KEGG" id="bta:519857"/>
<dbReference type="CTD" id="93166"/>
<dbReference type="VEuPathDB" id="HostDB:ENSBTAG00000020578"/>
<dbReference type="VGNC" id="VGNC:33298">
    <property type="gene designation" value="PRDM6"/>
</dbReference>
<dbReference type="eggNOG" id="KOG1721">
    <property type="taxonomic scope" value="Eukaryota"/>
</dbReference>
<dbReference type="eggNOG" id="KOG2461">
    <property type="taxonomic scope" value="Eukaryota"/>
</dbReference>
<dbReference type="GeneTree" id="ENSGT00940000155852"/>
<dbReference type="HOGENOM" id="CLU_032452_0_0_1"/>
<dbReference type="InParanoid" id="A6QPM3"/>
<dbReference type="OMA" id="CADHRHG"/>
<dbReference type="OrthoDB" id="7734462at2759"/>
<dbReference type="TreeFam" id="TF106403"/>
<dbReference type="Proteomes" id="UP000009136">
    <property type="component" value="Chromosome 7"/>
</dbReference>
<dbReference type="Bgee" id="ENSBTAG00000020578">
    <property type="expression patterns" value="Expressed in aorta and 72 other cell types or tissues"/>
</dbReference>
<dbReference type="GO" id="GO:0005634">
    <property type="term" value="C:nucleus"/>
    <property type="evidence" value="ECO:0000318"/>
    <property type="project" value="GO_Central"/>
</dbReference>
<dbReference type="GO" id="GO:0140944">
    <property type="term" value="F:histone H4K20 monomethyltransferase activity"/>
    <property type="evidence" value="ECO:0007669"/>
    <property type="project" value="UniProtKB-EC"/>
</dbReference>
<dbReference type="GO" id="GO:0042802">
    <property type="term" value="F:identical protein binding"/>
    <property type="evidence" value="ECO:0007669"/>
    <property type="project" value="Ensembl"/>
</dbReference>
<dbReference type="GO" id="GO:0008270">
    <property type="term" value="F:zinc ion binding"/>
    <property type="evidence" value="ECO:0007669"/>
    <property type="project" value="UniProtKB-KW"/>
</dbReference>
<dbReference type="GO" id="GO:0032259">
    <property type="term" value="P:methylation"/>
    <property type="evidence" value="ECO:0007669"/>
    <property type="project" value="UniProtKB-KW"/>
</dbReference>
<dbReference type="GO" id="GO:0051151">
    <property type="term" value="P:negative regulation of smooth muscle cell differentiation"/>
    <property type="evidence" value="ECO:0007669"/>
    <property type="project" value="Ensembl"/>
</dbReference>
<dbReference type="GO" id="GO:0000122">
    <property type="term" value="P:negative regulation of transcription by RNA polymerase II"/>
    <property type="evidence" value="ECO:0007669"/>
    <property type="project" value="Ensembl"/>
</dbReference>
<dbReference type="GO" id="GO:0022008">
    <property type="term" value="P:neurogenesis"/>
    <property type="evidence" value="ECO:0007669"/>
    <property type="project" value="Ensembl"/>
</dbReference>
<dbReference type="GO" id="GO:0010468">
    <property type="term" value="P:regulation of gene expression"/>
    <property type="evidence" value="ECO:0000318"/>
    <property type="project" value="GO_Central"/>
</dbReference>
<dbReference type="CDD" id="cd19191">
    <property type="entry name" value="PR-SET_PRDM6"/>
    <property type="match status" value="1"/>
</dbReference>
<dbReference type="FunFam" id="3.30.160.60:FF:000654">
    <property type="entry name" value="PR/SET domain 6"/>
    <property type="match status" value="1"/>
</dbReference>
<dbReference type="FunFam" id="3.30.160.60:FF:000778">
    <property type="entry name" value="PR/SET domain 6"/>
    <property type="match status" value="1"/>
</dbReference>
<dbReference type="FunFam" id="2.170.270.10:FF:000023">
    <property type="entry name" value="putative histone-lysine N-methyltransferase PRDM6"/>
    <property type="match status" value="1"/>
</dbReference>
<dbReference type="FunFam" id="3.30.160.60:FF:000868">
    <property type="entry name" value="putative histone-lysine N-methyltransferase PRDM6"/>
    <property type="match status" value="1"/>
</dbReference>
<dbReference type="Gene3D" id="3.30.160.60">
    <property type="entry name" value="Classic Zinc Finger"/>
    <property type="match status" value="3"/>
</dbReference>
<dbReference type="Gene3D" id="2.170.270.10">
    <property type="entry name" value="SET domain"/>
    <property type="match status" value="1"/>
</dbReference>
<dbReference type="InterPro" id="IPR044416">
    <property type="entry name" value="PRDM6_PR-SET"/>
</dbReference>
<dbReference type="InterPro" id="IPR001214">
    <property type="entry name" value="SET_dom"/>
</dbReference>
<dbReference type="InterPro" id="IPR046341">
    <property type="entry name" value="SET_dom_sf"/>
</dbReference>
<dbReference type="InterPro" id="IPR050331">
    <property type="entry name" value="Zinc_finger"/>
</dbReference>
<dbReference type="InterPro" id="IPR036236">
    <property type="entry name" value="Znf_C2H2_sf"/>
</dbReference>
<dbReference type="InterPro" id="IPR013087">
    <property type="entry name" value="Znf_C2H2_type"/>
</dbReference>
<dbReference type="PANTHER" id="PTHR16515:SF22">
    <property type="entry name" value="HISTONE-LYSINE N-METHYLTRANSFERASE PRDM6-RELATED"/>
    <property type="match status" value="1"/>
</dbReference>
<dbReference type="PANTHER" id="PTHR16515">
    <property type="entry name" value="PR DOMAIN ZINC FINGER PROTEIN"/>
    <property type="match status" value="1"/>
</dbReference>
<dbReference type="Pfam" id="PF21549">
    <property type="entry name" value="PRDM2_PR"/>
    <property type="match status" value="1"/>
</dbReference>
<dbReference type="Pfam" id="PF00096">
    <property type="entry name" value="zf-C2H2"/>
    <property type="match status" value="3"/>
</dbReference>
<dbReference type="SMART" id="SM00317">
    <property type="entry name" value="SET"/>
    <property type="match status" value="1"/>
</dbReference>
<dbReference type="SMART" id="SM00355">
    <property type="entry name" value="ZnF_C2H2"/>
    <property type="match status" value="4"/>
</dbReference>
<dbReference type="SUPFAM" id="SSF57667">
    <property type="entry name" value="beta-beta-alpha zinc fingers"/>
    <property type="match status" value="2"/>
</dbReference>
<dbReference type="SUPFAM" id="SSF82199">
    <property type="entry name" value="SET domain"/>
    <property type="match status" value="1"/>
</dbReference>
<dbReference type="PROSITE" id="PS50280">
    <property type="entry name" value="SET"/>
    <property type="match status" value="1"/>
</dbReference>
<dbReference type="PROSITE" id="PS00028">
    <property type="entry name" value="ZINC_FINGER_C2H2_1"/>
    <property type="match status" value="2"/>
</dbReference>
<dbReference type="PROSITE" id="PS50157">
    <property type="entry name" value="ZINC_FINGER_C2H2_2"/>
    <property type="match status" value="4"/>
</dbReference>
<feature type="chain" id="PRO_0000363958" description="Putative histone-lysine N-methyltransferase PRDM6">
    <location>
        <begin position="1"/>
        <end position="590"/>
    </location>
</feature>
<feature type="domain" description="SET" evidence="3">
    <location>
        <begin position="241"/>
        <end position="360"/>
    </location>
</feature>
<feature type="zinc finger region" description="C2H2-type 1; degenerate" evidence="2">
    <location>
        <begin position="468"/>
        <end position="490"/>
    </location>
</feature>
<feature type="zinc finger region" description="C2H2-type 2" evidence="2">
    <location>
        <begin position="496"/>
        <end position="518"/>
    </location>
</feature>
<feature type="zinc finger region" description="C2H2-type 3" evidence="2">
    <location>
        <begin position="524"/>
        <end position="546"/>
    </location>
</feature>
<feature type="zinc finger region" description="C2H2-type 4; degenerate" evidence="2">
    <location>
        <begin position="552"/>
        <end position="574"/>
    </location>
</feature>
<feature type="region of interest" description="Disordered" evidence="4">
    <location>
        <begin position="25"/>
        <end position="87"/>
    </location>
</feature>
<feature type="compositionally biased region" description="Gly residues" evidence="4">
    <location>
        <begin position="29"/>
        <end position="42"/>
    </location>
</feature>
<feature type="compositionally biased region" description="Low complexity" evidence="4">
    <location>
        <begin position="71"/>
        <end position="87"/>
    </location>
</feature>
<keyword id="KW-0156">Chromatin regulator</keyword>
<keyword id="KW-0479">Metal-binding</keyword>
<keyword id="KW-0489">Methyltransferase</keyword>
<keyword id="KW-0539">Nucleus</keyword>
<keyword id="KW-1185">Reference proteome</keyword>
<keyword id="KW-0677">Repeat</keyword>
<keyword id="KW-0678">Repressor</keyword>
<keyword id="KW-0949">S-adenosyl-L-methionine</keyword>
<keyword id="KW-0804">Transcription</keyword>
<keyword id="KW-0805">Transcription regulation</keyword>
<keyword id="KW-0808">Transferase</keyword>
<keyword id="KW-0862">Zinc</keyword>
<keyword id="KW-0863">Zinc-finger</keyword>
<evidence type="ECO:0000250" key="1">
    <source>
        <dbReference type="UniProtKB" id="Q3UZD5"/>
    </source>
</evidence>
<evidence type="ECO:0000255" key="2">
    <source>
        <dbReference type="PROSITE-ProRule" id="PRU00042"/>
    </source>
</evidence>
<evidence type="ECO:0000255" key="3">
    <source>
        <dbReference type="PROSITE-ProRule" id="PRU00190"/>
    </source>
</evidence>
<evidence type="ECO:0000256" key="4">
    <source>
        <dbReference type="SAM" id="MobiDB-lite"/>
    </source>
</evidence>
<protein>
    <recommendedName>
        <fullName>Putative histone-lysine N-methyltransferase PRDM6</fullName>
        <ecNumber evidence="1">2.1.1.361</ecNumber>
    </recommendedName>
    <alternativeName>
        <fullName>PR domain zinc finger protein 6</fullName>
    </alternativeName>
    <alternativeName>
        <fullName>PR domain-containing protein 6</fullName>
    </alternativeName>
</protein>
<name>PRDM6_BOVIN</name>
<accession>A6QPM3</accession>
<sequence>MLKPGDPGGSAFLKVDPAYLQHWQQLFPHGGGGPLKGGGAAGPLGAPQPLQPPPPPERAEPQPDSLRPRPASLSSASSTPASSSTSASSASSCAAAAAAAAAAALAGLSALPVAQLPVFAPLATVAAEPLPPKDLCLGATSGPGPSKCGGSGGDGRGVPRFRCSAEELDYYLYGQQRMEIIPLNQHTSDPNNRCDMCADNRNGECPMHGPLHSLRRLVGTSSAAAAAPPPELPEWLRDLPREVCLCTSTVPGLAYGICAAQRIQQGTWIGPFQGVLLPPEKVQAGAVRNTQHLWEIYDQDGTLQHFIDGGEPSKSSWMRYIRCARHCGEQNLTVVQYRSNIFYRACIDIPRGTELLVWYNDSYTSFFGIPLQCIAQDENLNVPSTVMEAMCRQDALQPFNKSSKLSQAPQQRSVVFPQTPCGRNFSLLDKSGPLESGFNQISVKNQRVLASPTSTSQLHSEFSDWHLWKCGQCFKTFTQRILLQMHVCTQNPDRPYQCGHCSQSFSQPSELRNHVVTHSSDRPFKCGYCGRAFAGATTLNNHIRTHTGEKPFKCERCERSFTQATQLSRHQRMPNECKPITESPESIEVD</sequence>
<proteinExistence type="evidence at transcript level"/>
<comment type="function">
    <text evidence="1">Putative histone methyltransferase that acts as a transcriptional repressor of smooth muscle gene expression. Promotes the transition from differentiated to proliferative smooth muscle by suppressing differentiation and maintaining the proliferative potential of vascular smooth muscle cells. Also plays a role in endothelial cells by inhibiting endothelial cell proliferation, survival and differentiation. It is unclear whether it has histone methyltransferase activity in vivo. According to some authors, it does not act as a histone methyltransferase by itself and represses transcription by recruiting EHMT2/G9a. According to others, it possesses histone methyltransferase activity when associated with other proteins and specifically methylates 'Lys-20' of histone H4 in vitro. 'Lys-20' methylation represents a specific tag for epigenetic transcriptional repression.</text>
</comment>
<comment type="catalytic activity">
    <reaction evidence="1">
        <text>L-lysyl(20)-[histone H4] + S-adenosyl-L-methionine = N(6)-methyl-L-lysyl(20)-[histone H4] + S-adenosyl-L-homocysteine + H(+)</text>
        <dbReference type="Rhea" id="RHEA:60344"/>
        <dbReference type="Rhea" id="RHEA-COMP:15554"/>
        <dbReference type="Rhea" id="RHEA-COMP:15555"/>
        <dbReference type="ChEBI" id="CHEBI:15378"/>
        <dbReference type="ChEBI" id="CHEBI:29969"/>
        <dbReference type="ChEBI" id="CHEBI:57856"/>
        <dbReference type="ChEBI" id="CHEBI:59789"/>
        <dbReference type="ChEBI" id="CHEBI:61929"/>
        <dbReference type="EC" id="2.1.1.361"/>
    </reaction>
</comment>
<comment type="subunit">
    <text evidence="1">Interacts with HDAC1, HDAC2, HDAC3, CBX1 and EP300.</text>
</comment>
<comment type="subcellular location">
    <subcellularLocation>
        <location evidence="1">Nucleus</location>
    </subcellularLocation>
</comment>
<comment type="similarity">
    <text evidence="3">Belongs to the class V-like SAM-binding methyltransferase superfamily.</text>
</comment>
<reference key="1">
    <citation type="submission" date="2007-07" db="EMBL/GenBank/DDBJ databases">
        <authorList>
            <consortium name="NIH - Mammalian Gene Collection (MGC) project"/>
        </authorList>
    </citation>
    <scope>NUCLEOTIDE SEQUENCE [LARGE SCALE MRNA]</scope>
    <source>
        <strain>Hereford</strain>
        <tissue>Fetal spinal cord</tissue>
    </source>
</reference>
<gene>
    <name type="primary">PRDM6</name>
</gene>
<organism>
    <name type="scientific">Bos taurus</name>
    <name type="common">Bovine</name>
    <dbReference type="NCBI Taxonomy" id="9913"/>
    <lineage>
        <taxon>Eukaryota</taxon>
        <taxon>Metazoa</taxon>
        <taxon>Chordata</taxon>
        <taxon>Craniata</taxon>
        <taxon>Vertebrata</taxon>
        <taxon>Euteleostomi</taxon>
        <taxon>Mammalia</taxon>
        <taxon>Eutheria</taxon>
        <taxon>Laurasiatheria</taxon>
        <taxon>Artiodactyla</taxon>
        <taxon>Ruminantia</taxon>
        <taxon>Pecora</taxon>
        <taxon>Bovidae</taxon>
        <taxon>Bovinae</taxon>
        <taxon>Bos</taxon>
    </lineage>
</organism>